<dbReference type="EC" id="4.2.1.33" evidence="1"/>
<dbReference type="EMBL" id="CP000686">
    <property type="protein sequence ID" value="ABQ90347.1"/>
    <property type="molecule type" value="Genomic_DNA"/>
</dbReference>
<dbReference type="RefSeq" id="WP_011956693.1">
    <property type="nucleotide sequence ID" value="NC_009523.1"/>
</dbReference>
<dbReference type="SMR" id="A5UUP4"/>
<dbReference type="STRING" id="357808.RoseRS_1960"/>
<dbReference type="KEGG" id="rrs:RoseRS_1960"/>
<dbReference type="eggNOG" id="COG0066">
    <property type="taxonomic scope" value="Bacteria"/>
</dbReference>
<dbReference type="HOGENOM" id="CLU_081378_0_3_0"/>
<dbReference type="OrthoDB" id="9777465at2"/>
<dbReference type="UniPathway" id="UPA00048">
    <property type="reaction ID" value="UER00071"/>
</dbReference>
<dbReference type="Proteomes" id="UP000006554">
    <property type="component" value="Chromosome"/>
</dbReference>
<dbReference type="GO" id="GO:0009316">
    <property type="term" value="C:3-isopropylmalate dehydratase complex"/>
    <property type="evidence" value="ECO:0007669"/>
    <property type="project" value="InterPro"/>
</dbReference>
<dbReference type="GO" id="GO:0003861">
    <property type="term" value="F:3-isopropylmalate dehydratase activity"/>
    <property type="evidence" value="ECO:0007669"/>
    <property type="project" value="UniProtKB-UniRule"/>
</dbReference>
<dbReference type="GO" id="GO:0009098">
    <property type="term" value="P:L-leucine biosynthetic process"/>
    <property type="evidence" value="ECO:0007669"/>
    <property type="project" value="UniProtKB-UniRule"/>
</dbReference>
<dbReference type="CDD" id="cd01577">
    <property type="entry name" value="IPMI_Swivel"/>
    <property type="match status" value="1"/>
</dbReference>
<dbReference type="FunFam" id="3.20.19.10:FF:000003">
    <property type="entry name" value="3-isopropylmalate dehydratase small subunit"/>
    <property type="match status" value="1"/>
</dbReference>
<dbReference type="Gene3D" id="3.20.19.10">
    <property type="entry name" value="Aconitase, domain 4"/>
    <property type="match status" value="1"/>
</dbReference>
<dbReference type="HAMAP" id="MF_01031">
    <property type="entry name" value="LeuD_type1"/>
    <property type="match status" value="1"/>
</dbReference>
<dbReference type="InterPro" id="IPR004431">
    <property type="entry name" value="3-IsopropMal_deHydase_ssu"/>
</dbReference>
<dbReference type="InterPro" id="IPR015928">
    <property type="entry name" value="Aconitase/3IPM_dehydase_swvl"/>
</dbReference>
<dbReference type="InterPro" id="IPR000573">
    <property type="entry name" value="AconitaseA/IPMdHydase_ssu_swvl"/>
</dbReference>
<dbReference type="InterPro" id="IPR033940">
    <property type="entry name" value="IPMI_Swivel"/>
</dbReference>
<dbReference type="InterPro" id="IPR050075">
    <property type="entry name" value="LeuD"/>
</dbReference>
<dbReference type="NCBIfam" id="TIGR00171">
    <property type="entry name" value="leuD"/>
    <property type="match status" value="1"/>
</dbReference>
<dbReference type="NCBIfam" id="NF002458">
    <property type="entry name" value="PRK01641.1"/>
    <property type="match status" value="1"/>
</dbReference>
<dbReference type="PANTHER" id="PTHR43345:SF5">
    <property type="entry name" value="3-ISOPROPYLMALATE DEHYDRATASE SMALL SUBUNIT"/>
    <property type="match status" value="1"/>
</dbReference>
<dbReference type="PANTHER" id="PTHR43345">
    <property type="entry name" value="3-ISOPROPYLMALATE DEHYDRATASE SMALL SUBUNIT 2-RELATED-RELATED"/>
    <property type="match status" value="1"/>
</dbReference>
<dbReference type="Pfam" id="PF00694">
    <property type="entry name" value="Aconitase_C"/>
    <property type="match status" value="1"/>
</dbReference>
<dbReference type="SUPFAM" id="SSF52016">
    <property type="entry name" value="LeuD/IlvD-like"/>
    <property type="match status" value="1"/>
</dbReference>
<evidence type="ECO:0000255" key="1">
    <source>
        <dbReference type="HAMAP-Rule" id="MF_01031"/>
    </source>
</evidence>
<sequence length="204" mass="22354">MQPISVITGRIVALPVQDIDTDQIIPARYLKVTDKSGLAEGLFYAWRFDADGKPNPDFVLNRPETQGATILVAGRNFGCGSSREHAPWALLGYGFKAVISPYFADIFRNNALKNGLLTVQVDDETYQQLVSLFDEDPTTTVTIDLAAQTVTLPDGRGVHFPIDPFTKHCLLHGVDQMGFLLNEEAAISAYEASRPARVVTTARS</sequence>
<keyword id="KW-0028">Amino-acid biosynthesis</keyword>
<keyword id="KW-0100">Branched-chain amino acid biosynthesis</keyword>
<keyword id="KW-0432">Leucine biosynthesis</keyword>
<keyword id="KW-0456">Lyase</keyword>
<organism>
    <name type="scientific">Roseiflexus sp. (strain RS-1)</name>
    <dbReference type="NCBI Taxonomy" id="357808"/>
    <lineage>
        <taxon>Bacteria</taxon>
        <taxon>Bacillati</taxon>
        <taxon>Chloroflexota</taxon>
        <taxon>Chloroflexia</taxon>
        <taxon>Chloroflexales</taxon>
        <taxon>Roseiflexineae</taxon>
        <taxon>Roseiflexaceae</taxon>
        <taxon>Roseiflexus</taxon>
    </lineage>
</organism>
<accession>A5UUP4</accession>
<name>LEUD_ROSS1</name>
<protein>
    <recommendedName>
        <fullName evidence="1">3-isopropylmalate dehydratase small subunit</fullName>
        <ecNumber evidence="1">4.2.1.33</ecNumber>
    </recommendedName>
    <alternativeName>
        <fullName evidence="1">Alpha-IPM isomerase</fullName>
        <shortName evidence="1">IPMI</shortName>
    </alternativeName>
    <alternativeName>
        <fullName evidence="1">Isopropylmalate isomerase</fullName>
    </alternativeName>
</protein>
<comment type="function">
    <text evidence="1">Catalyzes the isomerization between 2-isopropylmalate and 3-isopropylmalate, via the formation of 2-isopropylmaleate.</text>
</comment>
<comment type="catalytic activity">
    <reaction evidence="1">
        <text>(2R,3S)-3-isopropylmalate = (2S)-2-isopropylmalate</text>
        <dbReference type="Rhea" id="RHEA:32287"/>
        <dbReference type="ChEBI" id="CHEBI:1178"/>
        <dbReference type="ChEBI" id="CHEBI:35121"/>
        <dbReference type="EC" id="4.2.1.33"/>
    </reaction>
</comment>
<comment type="pathway">
    <text evidence="1">Amino-acid biosynthesis; L-leucine biosynthesis; L-leucine from 3-methyl-2-oxobutanoate: step 2/4.</text>
</comment>
<comment type="subunit">
    <text evidence="1">Heterodimer of LeuC and LeuD.</text>
</comment>
<comment type="similarity">
    <text evidence="1">Belongs to the LeuD family. LeuD type 1 subfamily.</text>
</comment>
<gene>
    <name evidence="1" type="primary">leuD</name>
    <name type="ordered locus">RoseRS_1960</name>
</gene>
<proteinExistence type="inferred from homology"/>
<reference key="1">
    <citation type="submission" date="2007-04" db="EMBL/GenBank/DDBJ databases">
        <title>Complete sequence of Roseiflexus sp. RS-1.</title>
        <authorList>
            <consortium name="US DOE Joint Genome Institute"/>
            <person name="Copeland A."/>
            <person name="Lucas S."/>
            <person name="Lapidus A."/>
            <person name="Barry K."/>
            <person name="Detter J.C."/>
            <person name="Glavina del Rio T."/>
            <person name="Hammon N."/>
            <person name="Israni S."/>
            <person name="Dalin E."/>
            <person name="Tice H."/>
            <person name="Pitluck S."/>
            <person name="Chertkov O."/>
            <person name="Brettin T."/>
            <person name="Bruce D."/>
            <person name="Han C."/>
            <person name="Schmutz J."/>
            <person name="Larimer F."/>
            <person name="Land M."/>
            <person name="Hauser L."/>
            <person name="Kyrpides N."/>
            <person name="Mikhailova N."/>
            <person name="Bryant D.A."/>
            <person name="Richardson P."/>
        </authorList>
    </citation>
    <scope>NUCLEOTIDE SEQUENCE [LARGE SCALE GENOMIC DNA]</scope>
    <source>
        <strain>RS-1</strain>
    </source>
</reference>
<feature type="chain" id="PRO_1000063824" description="3-isopropylmalate dehydratase small subunit">
    <location>
        <begin position="1"/>
        <end position="204"/>
    </location>
</feature>